<reference key="1">
    <citation type="journal article" date="2004" name="Nat. Genet.">
        <title>Complete sequencing and characterization of 21,243 full-length human cDNAs.</title>
        <authorList>
            <person name="Ota T."/>
            <person name="Suzuki Y."/>
            <person name="Nishikawa T."/>
            <person name="Otsuki T."/>
            <person name="Sugiyama T."/>
            <person name="Irie R."/>
            <person name="Wakamatsu A."/>
            <person name="Hayashi K."/>
            <person name="Sato H."/>
            <person name="Nagai K."/>
            <person name="Kimura K."/>
            <person name="Makita H."/>
            <person name="Sekine M."/>
            <person name="Obayashi M."/>
            <person name="Nishi T."/>
            <person name="Shibahara T."/>
            <person name="Tanaka T."/>
            <person name="Ishii S."/>
            <person name="Yamamoto J."/>
            <person name="Saito K."/>
            <person name="Kawai Y."/>
            <person name="Isono Y."/>
            <person name="Nakamura Y."/>
            <person name="Nagahari K."/>
            <person name="Murakami K."/>
            <person name="Yasuda T."/>
            <person name="Iwayanagi T."/>
            <person name="Wagatsuma M."/>
            <person name="Shiratori A."/>
            <person name="Sudo H."/>
            <person name="Hosoiri T."/>
            <person name="Kaku Y."/>
            <person name="Kodaira H."/>
            <person name="Kondo H."/>
            <person name="Sugawara M."/>
            <person name="Takahashi M."/>
            <person name="Kanda K."/>
            <person name="Yokoi T."/>
            <person name="Furuya T."/>
            <person name="Kikkawa E."/>
            <person name="Omura Y."/>
            <person name="Abe K."/>
            <person name="Kamihara K."/>
            <person name="Katsuta N."/>
            <person name="Sato K."/>
            <person name="Tanikawa M."/>
            <person name="Yamazaki M."/>
            <person name="Ninomiya K."/>
            <person name="Ishibashi T."/>
            <person name="Yamashita H."/>
            <person name="Murakawa K."/>
            <person name="Fujimori K."/>
            <person name="Tanai H."/>
            <person name="Kimata M."/>
            <person name="Watanabe M."/>
            <person name="Hiraoka S."/>
            <person name="Chiba Y."/>
            <person name="Ishida S."/>
            <person name="Ono Y."/>
            <person name="Takiguchi S."/>
            <person name="Watanabe S."/>
            <person name="Yosida M."/>
            <person name="Hotuta T."/>
            <person name="Kusano J."/>
            <person name="Kanehori K."/>
            <person name="Takahashi-Fujii A."/>
            <person name="Hara H."/>
            <person name="Tanase T.-O."/>
            <person name="Nomura Y."/>
            <person name="Togiya S."/>
            <person name="Komai F."/>
            <person name="Hara R."/>
            <person name="Takeuchi K."/>
            <person name="Arita M."/>
            <person name="Imose N."/>
            <person name="Musashino K."/>
            <person name="Yuuki H."/>
            <person name="Oshima A."/>
            <person name="Sasaki N."/>
            <person name="Aotsuka S."/>
            <person name="Yoshikawa Y."/>
            <person name="Matsunawa H."/>
            <person name="Ichihara T."/>
            <person name="Shiohata N."/>
            <person name="Sano S."/>
            <person name="Moriya S."/>
            <person name="Momiyama H."/>
            <person name="Satoh N."/>
            <person name="Takami S."/>
            <person name="Terashima Y."/>
            <person name="Suzuki O."/>
            <person name="Nakagawa S."/>
            <person name="Senoh A."/>
            <person name="Mizoguchi H."/>
            <person name="Goto Y."/>
            <person name="Shimizu F."/>
            <person name="Wakebe H."/>
            <person name="Hishigaki H."/>
            <person name="Watanabe T."/>
            <person name="Sugiyama A."/>
            <person name="Takemoto M."/>
            <person name="Kawakami B."/>
            <person name="Yamazaki M."/>
            <person name="Watanabe K."/>
            <person name="Kumagai A."/>
            <person name="Itakura S."/>
            <person name="Fukuzumi Y."/>
            <person name="Fujimori Y."/>
            <person name="Komiyama M."/>
            <person name="Tashiro H."/>
            <person name="Tanigami A."/>
            <person name="Fujiwara T."/>
            <person name="Ono T."/>
            <person name="Yamada K."/>
            <person name="Fujii Y."/>
            <person name="Ozaki K."/>
            <person name="Hirao M."/>
            <person name="Ohmori Y."/>
            <person name="Kawabata A."/>
            <person name="Hikiji T."/>
            <person name="Kobatake N."/>
            <person name="Inagaki H."/>
            <person name="Ikema Y."/>
            <person name="Okamoto S."/>
            <person name="Okitani R."/>
            <person name="Kawakami T."/>
            <person name="Noguchi S."/>
            <person name="Itoh T."/>
            <person name="Shigeta K."/>
            <person name="Senba T."/>
            <person name="Matsumura K."/>
            <person name="Nakajima Y."/>
            <person name="Mizuno T."/>
            <person name="Morinaga M."/>
            <person name="Sasaki M."/>
            <person name="Togashi T."/>
            <person name="Oyama M."/>
            <person name="Hata H."/>
            <person name="Watanabe M."/>
            <person name="Komatsu T."/>
            <person name="Mizushima-Sugano J."/>
            <person name="Satoh T."/>
            <person name="Shirai Y."/>
            <person name="Takahashi Y."/>
            <person name="Nakagawa K."/>
            <person name="Okumura K."/>
            <person name="Nagase T."/>
            <person name="Nomura N."/>
            <person name="Kikuchi H."/>
            <person name="Masuho Y."/>
            <person name="Yamashita R."/>
            <person name="Nakai K."/>
            <person name="Yada T."/>
            <person name="Nakamura Y."/>
            <person name="Ohara O."/>
            <person name="Isogai T."/>
            <person name="Sugano S."/>
        </authorList>
    </citation>
    <scope>NUCLEOTIDE SEQUENCE [LARGE SCALE MRNA]</scope>
    <scope>VARIANTS TRP-10; ARG-50 AND ALA-58</scope>
    <source>
        <tissue>Amygdala</tissue>
        <tissue>Hepatoma</tissue>
    </source>
</reference>
<reference key="2">
    <citation type="journal article" date="2006" name="Nature">
        <title>The DNA sequence and biological annotation of human chromosome 1.</title>
        <authorList>
            <person name="Gregory S.G."/>
            <person name="Barlow K.F."/>
            <person name="McLay K.E."/>
            <person name="Kaul R."/>
            <person name="Swarbreck D."/>
            <person name="Dunham A."/>
            <person name="Scott C.E."/>
            <person name="Howe K.L."/>
            <person name="Woodfine K."/>
            <person name="Spencer C.C.A."/>
            <person name="Jones M.C."/>
            <person name="Gillson C."/>
            <person name="Searle S."/>
            <person name="Zhou Y."/>
            <person name="Kokocinski F."/>
            <person name="McDonald L."/>
            <person name="Evans R."/>
            <person name="Phillips K."/>
            <person name="Atkinson A."/>
            <person name="Cooper R."/>
            <person name="Jones C."/>
            <person name="Hall R.E."/>
            <person name="Andrews T.D."/>
            <person name="Lloyd C."/>
            <person name="Ainscough R."/>
            <person name="Almeida J.P."/>
            <person name="Ambrose K.D."/>
            <person name="Anderson F."/>
            <person name="Andrew R.W."/>
            <person name="Ashwell R.I.S."/>
            <person name="Aubin K."/>
            <person name="Babbage A.K."/>
            <person name="Bagguley C.L."/>
            <person name="Bailey J."/>
            <person name="Beasley H."/>
            <person name="Bethel G."/>
            <person name="Bird C.P."/>
            <person name="Bray-Allen S."/>
            <person name="Brown J.Y."/>
            <person name="Brown A.J."/>
            <person name="Buckley D."/>
            <person name="Burton J."/>
            <person name="Bye J."/>
            <person name="Carder C."/>
            <person name="Chapman J.C."/>
            <person name="Clark S.Y."/>
            <person name="Clarke G."/>
            <person name="Clee C."/>
            <person name="Cobley V."/>
            <person name="Collier R.E."/>
            <person name="Corby N."/>
            <person name="Coville G.J."/>
            <person name="Davies J."/>
            <person name="Deadman R."/>
            <person name="Dunn M."/>
            <person name="Earthrowl M."/>
            <person name="Ellington A.G."/>
            <person name="Errington H."/>
            <person name="Frankish A."/>
            <person name="Frankland J."/>
            <person name="French L."/>
            <person name="Garner P."/>
            <person name="Garnett J."/>
            <person name="Gay L."/>
            <person name="Ghori M.R.J."/>
            <person name="Gibson R."/>
            <person name="Gilby L.M."/>
            <person name="Gillett W."/>
            <person name="Glithero R.J."/>
            <person name="Grafham D.V."/>
            <person name="Griffiths C."/>
            <person name="Griffiths-Jones S."/>
            <person name="Grocock R."/>
            <person name="Hammond S."/>
            <person name="Harrison E.S.I."/>
            <person name="Hart E."/>
            <person name="Haugen E."/>
            <person name="Heath P.D."/>
            <person name="Holmes S."/>
            <person name="Holt K."/>
            <person name="Howden P.J."/>
            <person name="Hunt A.R."/>
            <person name="Hunt S.E."/>
            <person name="Hunter G."/>
            <person name="Isherwood J."/>
            <person name="James R."/>
            <person name="Johnson C."/>
            <person name="Johnson D."/>
            <person name="Joy A."/>
            <person name="Kay M."/>
            <person name="Kershaw J.K."/>
            <person name="Kibukawa M."/>
            <person name="Kimberley A.M."/>
            <person name="King A."/>
            <person name="Knights A.J."/>
            <person name="Lad H."/>
            <person name="Laird G."/>
            <person name="Lawlor S."/>
            <person name="Leongamornlert D.A."/>
            <person name="Lloyd D.M."/>
            <person name="Loveland J."/>
            <person name="Lovell J."/>
            <person name="Lush M.J."/>
            <person name="Lyne R."/>
            <person name="Martin S."/>
            <person name="Mashreghi-Mohammadi M."/>
            <person name="Matthews L."/>
            <person name="Matthews N.S.W."/>
            <person name="McLaren S."/>
            <person name="Milne S."/>
            <person name="Mistry S."/>
            <person name="Moore M.J.F."/>
            <person name="Nickerson T."/>
            <person name="O'Dell C.N."/>
            <person name="Oliver K."/>
            <person name="Palmeiri A."/>
            <person name="Palmer S.A."/>
            <person name="Parker A."/>
            <person name="Patel D."/>
            <person name="Pearce A.V."/>
            <person name="Peck A.I."/>
            <person name="Pelan S."/>
            <person name="Phelps K."/>
            <person name="Phillimore B.J."/>
            <person name="Plumb R."/>
            <person name="Rajan J."/>
            <person name="Raymond C."/>
            <person name="Rouse G."/>
            <person name="Saenphimmachak C."/>
            <person name="Sehra H.K."/>
            <person name="Sheridan E."/>
            <person name="Shownkeen R."/>
            <person name="Sims S."/>
            <person name="Skuce C.D."/>
            <person name="Smith M."/>
            <person name="Steward C."/>
            <person name="Subramanian S."/>
            <person name="Sycamore N."/>
            <person name="Tracey A."/>
            <person name="Tromans A."/>
            <person name="Van Helmond Z."/>
            <person name="Wall M."/>
            <person name="Wallis J.M."/>
            <person name="White S."/>
            <person name="Whitehead S.L."/>
            <person name="Wilkinson J.E."/>
            <person name="Willey D.L."/>
            <person name="Williams H."/>
            <person name="Wilming L."/>
            <person name="Wray P.W."/>
            <person name="Wu Z."/>
            <person name="Coulson A."/>
            <person name="Vaudin M."/>
            <person name="Sulston J.E."/>
            <person name="Durbin R.M."/>
            <person name="Hubbard T."/>
            <person name="Wooster R."/>
            <person name="Dunham I."/>
            <person name="Carter N.P."/>
            <person name="McVean G."/>
            <person name="Ross M.T."/>
            <person name="Harrow J."/>
            <person name="Olson M.V."/>
            <person name="Beck S."/>
            <person name="Rogers J."/>
            <person name="Bentley D.R."/>
        </authorList>
    </citation>
    <scope>NUCLEOTIDE SEQUENCE [LARGE SCALE GENOMIC DNA]</scope>
</reference>
<reference key="3">
    <citation type="journal article" date="2004" name="Genome Res.">
        <title>The status, quality, and expansion of the NIH full-length cDNA project: the Mammalian Gene Collection (MGC).</title>
        <authorList>
            <consortium name="The MGC Project Team"/>
        </authorList>
    </citation>
    <scope>NUCLEOTIDE SEQUENCE [LARGE SCALE MRNA]</scope>
    <scope>VARIANTS TRP-10; ARG-50 AND ALA-58</scope>
    <source>
        <tissue>Kidney</tissue>
        <tissue>Lymph</tissue>
        <tissue>Ovary</tissue>
        <tissue>Skin</tissue>
    </source>
</reference>
<reference key="4">
    <citation type="journal article" date="2002" name="Mol. Biol. Cell">
        <title>Functional proteomic analysis of human nucleolus.</title>
        <authorList>
            <person name="Scherl A."/>
            <person name="Coute Y."/>
            <person name="Deon C."/>
            <person name="Calle A."/>
            <person name="Kindbeiter K."/>
            <person name="Sanchez J.-C."/>
            <person name="Greco A."/>
            <person name="Hochstrasser D.F."/>
            <person name="Diaz J.-J."/>
        </authorList>
    </citation>
    <scope>SUBCELLULAR LOCATION [LARGE SCALE ANALYSIS]</scope>
    <source>
        <tissue>Cervix carcinoma</tissue>
    </source>
</reference>
<reference key="5">
    <citation type="journal article" date="2009" name="Anal. Chem.">
        <title>Lys-N and trypsin cover complementary parts of the phosphoproteome in a refined SCX-based approach.</title>
        <authorList>
            <person name="Gauci S."/>
            <person name="Helbig A.O."/>
            <person name="Slijper M."/>
            <person name="Krijgsveld J."/>
            <person name="Heck A.J."/>
            <person name="Mohammed S."/>
        </authorList>
    </citation>
    <scope>ACETYLATION [LARGE SCALE ANALYSIS] AT ALA-2</scope>
    <scope>CLEAVAGE OF INITIATOR METHIONINE [LARGE SCALE ANALYSIS]</scope>
    <scope>IDENTIFICATION BY MASS SPECTROMETRY [LARGE SCALE ANALYSIS]</scope>
</reference>
<reference key="6">
    <citation type="journal article" date="2009" name="Sci. Signal.">
        <title>Quantitative phosphoproteomic analysis of T cell receptor signaling reveals system-wide modulation of protein-protein interactions.</title>
        <authorList>
            <person name="Mayya V."/>
            <person name="Lundgren D.H."/>
            <person name="Hwang S.-I."/>
            <person name="Rezaul K."/>
            <person name="Wu L."/>
            <person name="Eng J.K."/>
            <person name="Rodionov V."/>
            <person name="Han D.K."/>
        </authorList>
    </citation>
    <scope>IDENTIFICATION BY MASS SPECTROMETRY [LARGE SCALE ANALYSIS]</scope>
    <source>
        <tissue>Leukemic T-cell</tissue>
    </source>
</reference>
<reference key="7">
    <citation type="journal article" date="2010" name="EMBO J.">
        <title>Nol9 is a novel polynucleotide 5'-kinase involved in ribosomal RNA processing.</title>
        <authorList>
            <person name="Heindl K."/>
            <person name="Martinez J."/>
        </authorList>
    </citation>
    <scope>FUNCTION</scope>
    <scope>SUBCELLULAR LOCATION</scope>
    <scope>ATP-BINDING</scope>
    <scope>RNA-BINDING</scope>
    <scope>MUTAGENESIS OF LYS-312 AND SER-313</scope>
    <scope>CATALYTIC ACTIVITY</scope>
</reference>
<reference key="8">
    <citation type="journal article" date="2010" name="Sci. Signal.">
        <title>Quantitative phosphoproteomics reveals widespread full phosphorylation site occupancy during mitosis.</title>
        <authorList>
            <person name="Olsen J.V."/>
            <person name="Vermeulen M."/>
            <person name="Santamaria A."/>
            <person name="Kumar C."/>
            <person name="Miller M.L."/>
            <person name="Jensen L.J."/>
            <person name="Gnad F."/>
            <person name="Cox J."/>
            <person name="Jensen T.S."/>
            <person name="Nigg E.A."/>
            <person name="Brunak S."/>
            <person name="Mann M."/>
        </authorList>
    </citation>
    <scope>PHOSPHORYLATION [LARGE SCALE ANALYSIS] AT SER-487</scope>
    <scope>IDENTIFICATION BY MASS SPECTROMETRY [LARGE SCALE ANALYSIS]</scope>
    <source>
        <tissue>Cervix carcinoma</tissue>
    </source>
</reference>
<reference key="9">
    <citation type="journal article" date="2011" name="Sci. Signal.">
        <title>System-wide temporal characterization of the proteome and phosphoproteome of human embryonic stem cell differentiation.</title>
        <authorList>
            <person name="Rigbolt K.T."/>
            <person name="Prokhorova T.A."/>
            <person name="Akimov V."/>
            <person name="Henningsen J."/>
            <person name="Johansen P.T."/>
            <person name="Kratchmarova I."/>
            <person name="Kassem M."/>
            <person name="Mann M."/>
            <person name="Olsen J.V."/>
            <person name="Blagoev B."/>
        </authorList>
    </citation>
    <scope>PHOSPHORYLATION [LARGE SCALE ANALYSIS] AT SER-487</scope>
    <scope>IDENTIFICATION BY MASS SPECTROMETRY [LARGE SCALE ANALYSIS]</scope>
</reference>
<reference key="10">
    <citation type="journal article" date="2012" name="Mol. Cell. Proteomics">
        <title>Comparative large-scale characterisation of plant vs. mammal proteins reveals similar and idiosyncratic N-alpha acetylation features.</title>
        <authorList>
            <person name="Bienvenut W.V."/>
            <person name="Sumpton D."/>
            <person name="Martinez A."/>
            <person name="Lilla S."/>
            <person name="Espagne C."/>
            <person name="Meinnel T."/>
            <person name="Giglione C."/>
        </authorList>
    </citation>
    <scope>ACETYLATION [LARGE SCALE ANALYSIS] AT ALA-2</scope>
    <scope>CLEAVAGE OF INITIATOR METHIONINE [LARGE SCALE ANALYSIS]</scope>
    <scope>IDENTIFICATION BY MASS SPECTROMETRY [LARGE SCALE ANALYSIS]</scope>
</reference>
<reference key="11">
    <citation type="journal article" date="2013" name="J. Proteome Res.">
        <title>Toward a comprehensive characterization of a human cancer cell phosphoproteome.</title>
        <authorList>
            <person name="Zhou H."/>
            <person name="Di Palma S."/>
            <person name="Preisinger C."/>
            <person name="Peng M."/>
            <person name="Polat A.N."/>
            <person name="Heck A.J."/>
            <person name="Mohammed S."/>
        </authorList>
    </citation>
    <scope>PHOSPHORYLATION [LARGE SCALE ANALYSIS] AT SER-487</scope>
    <scope>IDENTIFICATION BY MASS SPECTROMETRY [LARGE SCALE ANALYSIS]</scope>
    <source>
        <tissue>Erythroleukemia</tissue>
    </source>
</reference>
<reference key="12">
    <citation type="journal article" date="2017" name="Nat. Struct. Mol. Biol.">
        <title>Site-specific mapping of the human SUMO proteome reveals co-modification with phosphorylation.</title>
        <authorList>
            <person name="Hendriks I.A."/>
            <person name="Lyon D."/>
            <person name="Young C."/>
            <person name="Jensen L.J."/>
            <person name="Vertegaal A.C."/>
            <person name="Nielsen M.L."/>
        </authorList>
    </citation>
    <scope>SUMOYLATION [LARGE SCALE ANALYSIS] AT LYS-485</scope>
    <scope>IDENTIFICATION BY MASS SPECTROMETRY [LARGE SCALE ANALYSIS]</scope>
</reference>
<reference key="13">
    <citation type="journal article" date="2019" name="J. Mol. Biol.">
        <title>Nol9 Is a Spatial Regulator for the Human ITS2 Pre-rRNA Endonuclease-Kinase Complex.</title>
        <authorList>
            <person name="Gordon J."/>
            <person name="Pillon M.C."/>
            <person name="Stanley R.E."/>
        </authorList>
    </citation>
    <scope>FUNCTION</scope>
    <scope>SUBCELLULAR LOCATION</scope>
    <scope>INTERACTION WITH LAS1L</scope>
    <scope>NUCLEOLAR LOCALIZATION SIGNAL</scope>
</reference>
<evidence type="ECO:0000250" key="1">
    <source>
        <dbReference type="UniProtKB" id="Q3TZX8"/>
    </source>
</evidence>
<evidence type="ECO:0000256" key="2">
    <source>
        <dbReference type="SAM" id="MobiDB-lite"/>
    </source>
</evidence>
<evidence type="ECO:0000269" key="3">
    <source>
    </source>
</evidence>
<evidence type="ECO:0000269" key="4">
    <source>
    </source>
</evidence>
<evidence type="ECO:0000269" key="5">
    <source>
    </source>
</evidence>
<evidence type="ECO:0000269" key="6">
    <source>
    </source>
</evidence>
<evidence type="ECO:0000269" key="7">
    <source>
    </source>
</evidence>
<evidence type="ECO:0000305" key="8"/>
<evidence type="ECO:0007744" key="9">
    <source>
    </source>
</evidence>
<evidence type="ECO:0007744" key="10">
    <source>
    </source>
</evidence>
<evidence type="ECO:0007744" key="11">
    <source>
    </source>
</evidence>
<evidence type="ECO:0007744" key="12">
    <source>
    </source>
</evidence>
<evidence type="ECO:0007744" key="13">
    <source>
    </source>
</evidence>
<evidence type="ECO:0007744" key="14">
    <source>
    </source>
</evidence>
<feature type="initiator methionine" description="Removed" evidence="9 12">
    <location>
        <position position="1"/>
    </location>
</feature>
<feature type="chain" id="PRO_0000096939" description="Polynucleotide 5'-hydroxyl-kinase NOL9">
    <location>
        <begin position="2"/>
        <end position="702"/>
    </location>
</feature>
<feature type="region of interest" description="Disordered" evidence="2">
    <location>
        <begin position="69"/>
        <end position="101"/>
    </location>
</feature>
<feature type="region of interest" description="Interaction with LAS1L" evidence="7">
    <location>
        <begin position="480"/>
        <end position="702"/>
    </location>
</feature>
<feature type="region of interest" description="Disordered" evidence="2">
    <location>
        <begin position="680"/>
        <end position="702"/>
    </location>
</feature>
<feature type="short sequence motif" description="Nucleolar localization signal" evidence="7">
    <location>
        <begin position="31"/>
        <end position="47"/>
    </location>
</feature>
<feature type="compositionally biased region" description="Low complexity" evidence="2">
    <location>
        <begin position="71"/>
        <end position="83"/>
    </location>
</feature>
<feature type="compositionally biased region" description="Basic and acidic residues" evidence="2">
    <location>
        <begin position="680"/>
        <end position="689"/>
    </location>
</feature>
<feature type="compositionally biased region" description="Basic residues" evidence="2">
    <location>
        <begin position="690"/>
        <end position="702"/>
    </location>
</feature>
<feature type="binding site" evidence="8">
    <location>
        <begin position="306"/>
        <end position="313"/>
    </location>
    <ligand>
        <name>ATP</name>
        <dbReference type="ChEBI" id="CHEBI:30616"/>
    </ligand>
</feature>
<feature type="modified residue" description="N-acetylalanine" evidence="9 12">
    <location>
        <position position="2"/>
    </location>
</feature>
<feature type="modified residue" description="Phosphoserine" evidence="10 11 13">
    <location>
        <position position="487"/>
    </location>
</feature>
<feature type="cross-link" description="Glycyl lysine isopeptide (Lys-Gly) (interchain with G-Cter in SUMO2)" evidence="14">
    <location>
        <position position="485"/>
    </location>
</feature>
<feature type="sequence variant" id="VAR_054777" description="In dbSNP:rs4908923." evidence="4 5">
    <original>R</original>
    <variation>W</variation>
    <location>
        <position position="10"/>
    </location>
</feature>
<feature type="sequence variant" id="VAR_054778" description="In dbSNP:rs6693400." evidence="4 5">
    <original>W</original>
    <variation>R</variation>
    <location>
        <position position="50"/>
    </location>
</feature>
<feature type="sequence variant" id="VAR_054779" description="In dbSNP:rs6693391." evidence="4 5">
    <original>S</original>
    <variation>A</variation>
    <location>
        <position position="58"/>
    </location>
</feature>
<feature type="sequence variant" id="VAR_056955" description="In dbSNP:rs17029613.">
    <original>I</original>
    <variation>V</variation>
    <location>
        <position position="420"/>
    </location>
</feature>
<feature type="mutagenesis site" description="Abolishes kinase activity and rRNA processing." evidence="6">
    <original>K</original>
    <variation>A</variation>
    <location>
        <position position="312"/>
    </location>
</feature>
<feature type="mutagenesis site" description="Abolishes kinase activity and rRNA processing." evidence="6">
    <original>S</original>
    <variation>A</variation>
    <location>
        <position position="313"/>
    </location>
</feature>
<name>NOL9_HUMAN</name>
<accession>Q5SY16</accession>
<accession>Q2NL84</accession>
<accession>Q4VBY3</accession>
<accession>Q6P472</accession>
<accession>Q7L4D6</accession>
<accession>Q96EE0</accession>
<accession>Q9H5L4</accession>
<proteinExistence type="evidence at protein level"/>
<comment type="function">
    <text evidence="6 7">Polynucleotide kinase that can phosphorylate the 5'-hydroxyl groups of single-stranded and double-stranded RNA and DNA substrates (PubMed:21063389). Involved in rRNA processing and its kinase activity is required for the processing of the 32S precursor into 5.8S and 28S rRNAs, more specifically for the generation of the major 5.8S(S) form (PubMed:21063389). Required for the efficient pre-rRNA processing of internal transcribed spacer 2 (ITS2) (PubMed:21063389). Associates with LAS1L to form an ITS2 pre-rRNA endonuclease-kinase complex and is responsible for the transport of this complex into the nucleolus (PubMed:31288032).</text>
</comment>
<comment type="catalytic activity">
    <reaction evidence="6">
        <text>a 5'-end dephospho-2'-deoxyribonucleoside-DNA + ATP = a 5'-end 5'-phospho-2'-deoxyribonucleoside-DNA + ADP + H(+)</text>
        <dbReference type="Rhea" id="RHEA:15669"/>
        <dbReference type="Rhea" id="RHEA-COMP:13180"/>
        <dbReference type="Rhea" id="RHEA-COMP:13184"/>
        <dbReference type="ChEBI" id="CHEBI:15378"/>
        <dbReference type="ChEBI" id="CHEBI:30616"/>
        <dbReference type="ChEBI" id="CHEBI:136412"/>
        <dbReference type="ChEBI" id="CHEBI:136416"/>
        <dbReference type="ChEBI" id="CHEBI:456216"/>
        <dbReference type="EC" id="2.7.1.78"/>
    </reaction>
</comment>
<comment type="catalytic activity">
    <reaction evidence="6">
        <text>a 5'-end dephospho-ribonucleoside-RNA + ATP = a 5'-end 5'-phospho-ribonucleoside-RNA + ADP + H(+)</text>
        <dbReference type="Rhea" id="RHEA:54580"/>
        <dbReference type="Rhea" id="RHEA-COMP:13936"/>
        <dbReference type="Rhea" id="RHEA-COMP:15179"/>
        <dbReference type="ChEBI" id="CHEBI:15378"/>
        <dbReference type="ChEBI" id="CHEBI:30616"/>
        <dbReference type="ChEBI" id="CHEBI:138282"/>
        <dbReference type="ChEBI" id="CHEBI:138284"/>
        <dbReference type="ChEBI" id="CHEBI:456216"/>
        <dbReference type="EC" id="2.7.1.78"/>
    </reaction>
</comment>
<comment type="subunit">
    <text evidence="1 7">Interacts with PELP1, WDR18 and SENP3 (By similarity). Interacts with LAS1L to form an ITS2 pre-rRNA endonuclease-kinase complex (PubMed:31288032).</text>
</comment>
<comment type="interaction">
    <interactant intactId="EBI-1055462">
        <id>Q5SY16</id>
    </interactant>
    <interactant intactId="EBI-10245106">
        <id>Q09666-2</id>
        <label>AHNAK</label>
    </interactant>
    <organismsDiffer>false</organismsDiffer>
    <experiments>3</experiments>
</comment>
<comment type="interaction">
    <interactant intactId="EBI-1055462">
        <id>Q5SY16</id>
    </interactant>
    <interactant intactId="EBI-716663">
        <id>P53041</id>
        <label>PPP5C</label>
    </interactant>
    <organismsDiffer>false</organismsDiffer>
    <experiments>2</experiments>
</comment>
<comment type="interaction">
    <interactant intactId="EBI-1055462">
        <id>Q5SY16</id>
    </interactant>
    <interactant intactId="EBI-307352">
        <id>Q04864</id>
        <label>REL</label>
    </interactant>
    <organismsDiffer>false</organismsDiffer>
    <experiments>3</experiments>
</comment>
<comment type="interaction">
    <interactant intactId="EBI-1055462">
        <id>Q5SY16</id>
    </interactant>
    <interactant intactId="EBI-533224">
        <id>P15884</id>
        <label>TCF4</label>
    </interactant>
    <organismsDiffer>false</organismsDiffer>
    <experiments>3</experiments>
</comment>
<comment type="subcellular location">
    <subcellularLocation>
        <location evidence="1">Nucleus</location>
    </subcellularLocation>
    <subcellularLocation>
        <location evidence="3 6 7">Nucleus</location>
        <location evidence="3 6 7">Nucleolus</location>
    </subcellularLocation>
    <text>Colocalizes with pre-60S rRNP particles.</text>
</comment>
<comment type="similarity">
    <text evidence="8">Belongs to the Clp1 family. NOL9/GRC3 subfamily.</text>
</comment>
<comment type="sequence caution" evidence="8">
    <conflict type="erroneous initiation">
        <sequence resource="EMBL-CDS" id="BAB15611"/>
    </conflict>
    <text>Truncated N-terminus.</text>
</comment>
<protein>
    <recommendedName>
        <fullName>Polynucleotide 5'-hydroxyl-kinase NOL9</fullName>
        <ecNumber evidence="6">2.7.1.78</ecNumber>
    </recommendedName>
    <alternativeName>
        <fullName>Nucleolar protein 9</fullName>
    </alternativeName>
</protein>
<sequence length="702" mass="79323">MADSGLLLKRGSCRSTWLRVRKARPQLILSRRPRRRLGSLRWCGRRRLRWRLLQAQASGVDWREGARQVSRAAAARRPNTATPSPIPSPTPASEPESEPELESASSCHRPLLIPPVRPVGPGRALLLLPVEQGFTFSGICRVTCLYGQVQVFGFTISQGQPAQDIFSVYTHSCLSIHALHYSQPEKSKKELKREARNLLKSHLNLDDRRWSMQNFSPQCSIVLLEHLKTATVNFITSYPGSSYIFVQESPTPQIKPEYLALRSVGIRREKKRKGLQLTESTLSALEELVNVSCEEVDGCPVILVCGSQDVGKSTFNRYLINHLLNSLPCVDYLECDLGQTEFTPPGCISLLNITEPVLGPPFTHLRTPQKMVYYGKPSCKNNYENYIDIVKYVFSAYKRESPLIVNTMGWVSDQGLLLLIDLIRLLSPSHVVQFRSDHSKYMPDLTPQYVDDMDGLYTKSKTKMRNRRFRLAAFADALEFADEEKESPVEFTGHKLIGVYTDFAFRITPRNRESHNKILRDLSILSYLSQLQPPMPKPLSPLHSLTPYQVPFNAVALRITHSDVAPTHILYAVNASWVGLCKIQDDVRGYTNGPILLAQTPICDCLGFGICRGIDMEKRLYHILTPVPPEELRTVNCLLVGAIAIPHCVLKCQRGIEGTVPYVTTDYNFKLPGASEKIGAREPEEAHKEKPYRRPKFCRKMK</sequence>
<gene>
    <name type="primary">NOL9</name>
</gene>
<organism>
    <name type="scientific">Homo sapiens</name>
    <name type="common">Human</name>
    <dbReference type="NCBI Taxonomy" id="9606"/>
    <lineage>
        <taxon>Eukaryota</taxon>
        <taxon>Metazoa</taxon>
        <taxon>Chordata</taxon>
        <taxon>Craniata</taxon>
        <taxon>Vertebrata</taxon>
        <taxon>Euteleostomi</taxon>
        <taxon>Mammalia</taxon>
        <taxon>Eutheria</taxon>
        <taxon>Euarchontoglires</taxon>
        <taxon>Primates</taxon>
        <taxon>Haplorrhini</taxon>
        <taxon>Catarrhini</taxon>
        <taxon>Hominidae</taxon>
        <taxon>Homo</taxon>
    </lineage>
</organism>
<keyword id="KW-0007">Acetylation</keyword>
<keyword id="KW-0067">ATP-binding</keyword>
<keyword id="KW-1017">Isopeptide bond</keyword>
<keyword id="KW-0418">Kinase</keyword>
<keyword id="KW-0547">Nucleotide-binding</keyword>
<keyword id="KW-0539">Nucleus</keyword>
<keyword id="KW-0597">Phosphoprotein</keyword>
<keyword id="KW-1267">Proteomics identification</keyword>
<keyword id="KW-1185">Reference proteome</keyword>
<keyword id="KW-0694">RNA-binding</keyword>
<keyword id="KW-0698">rRNA processing</keyword>
<keyword id="KW-0808">Transferase</keyword>
<keyword id="KW-0832">Ubl conjugation</keyword>
<dbReference type="EC" id="2.7.1.78" evidence="6"/>
<dbReference type="EMBL" id="AK026976">
    <property type="protein sequence ID" value="BAB15611.1"/>
    <property type="status" value="ALT_INIT"/>
    <property type="molecule type" value="mRNA"/>
</dbReference>
<dbReference type="EMBL" id="AK289653">
    <property type="protein sequence ID" value="BAF82342.1"/>
    <property type="molecule type" value="mRNA"/>
</dbReference>
<dbReference type="EMBL" id="AL591866">
    <property type="status" value="NOT_ANNOTATED_CDS"/>
    <property type="molecule type" value="Genomic_DNA"/>
</dbReference>
<dbReference type="EMBL" id="BC009257">
    <property type="protein sequence ID" value="AAH09257.2"/>
    <property type="molecule type" value="mRNA"/>
</dbReference>
<dbReference type="EMBL" id="BC012439">
    <property type="protein sequence ID" value="AAH12439.1"/>
    <property type="molecule type" value="mRNA"/>
</dbReference>
<dbReference type="EMBL" id="BC063639">
    <property type="protein sequence ID" value="AAH63639.1"/>
    <property type="molecule type" value="mRNA"/>
</dbReference>
<dbReference type="EMBL" id="BC094836">
    <property type="protein sequence ID" value="AAH94836.1"/>
    <property type="molecule type" value="mRNA"/>
</dbReference>
<dbReference type="EMBL" id="BC105095">
    <property type="protein sequence ID" value="AAI05096.1"/>
    <property type="molecule type" value="mRNA"/>
</dbReference>
<dbReference type="EMBL" id="BC110849">
    <property type="protein sequence ID" value="AAI10850.1"/>
    <property type="molecule type" value="mRNA"/>
</dbReference>
<dbReference type="EMBL" id="BC112278">
    <property type="protein sequence ID" value="AAI12279.1"/>
    <property type="molecule type" value="mRNA"/>
</dbReference>
<dbReference type="CCDS" id="CCDS80.1"/>
<dbReference type="RefSeq" id="NP_078930.3">
    <property type="nucleotide sequence ID" value="NM_024654.4"/>
</dbReference>
<dbReference type="RefSeq" id="XP_011540449.1">
    <property type="nucleotide sequence ID" value="XM_011542147.2"/>
</dbReference>
<dbReference type="RefSeq" id="XP_016857827.1">
    <property type="nucleotide sequence ID" value="XM_017002338.1"/>
</dbReference>
<dbReference type="RefSeq" id="XP_016857828.1">
    <property type="nucleotide sequence ID" value="XM_017002339.1"/>
</dbReference>
<dbReference type="SMR" id="Q5SY16"/>
<dbReference type="BioGRID" id="122825">
    <property type="interactions" value="177"/>
</dbReference>
<dbReference type="ComplexPortal" id="CPX-8081">
    <property type="entry name" value="Rixosome RNA degradation complex"/>
</dbReference>
<dbReference type="CORUM" id="Q5SY16"/>
<dbReference type="FunCoup" id="Q5SY16">
    <property type="interactions" value="3788"/>
</dbReference>
<dbReference type="IntAct" id="Q5SY16">
    <property type="interactions" value="87"/>
</dbReference>
<dbReference type="MINT" id="Q5SY16"/>
<dbReference type="STRING" id="9606.ENSP00000366934"/>
<dbReference type="GlyGen" id="Q5SY16">
    <property type="glycosylation" value="2 sites"/>
</dbReference>
<dbReference type="iPTMnet" id="Q5SY16"/>
<dbReference type="PhosphoSitePlus" id="Q5SY16"/>
<dbReference type="SwissPalm" id="Q5SY16"/>
<dbReference type="BioMuta" id="NOL9"/>
<dbReference type="DMDM" id="73921242"/>
<dbReference type="jPOST" id="Q5SY16"/>
<dbReference type="MassIVE" id="Q5SY16"/>
<dbReference type="PaxDb" id="9606-ENSP00000366934"/>
<dbReference type="PeptideAtlas" id="Q5SY16"/>
<dbReference type="ProteomicsDB" id="64010"/>
<dbReference type="Pumba" id="Q5SY16"/>
<dbReference type="Antibodypedia" id="53093">
    <property type="antibodies" value="52 antibodies from 24 providers"/>
</dbReference>
<dbReference type="DNASU" id="79707"/>
<dbReference type="Ensembl" id="ENST00000377705.6">
    <property type="protein sequence ID" value="ENSP00000366934.5"/>
    <property type="gene ID" value="ENSG00000162408.11"/>
</dbReference>
<dbReference type="GeneID" id="79707"/>
<dbReference type="KEGG" id="hsa:79707"/>
<dbReference type="MANE-Select" id="ENST00000377705.6">
    <property type="protein sequence ID" value="ENSP00000366934.5"/>
    <property type="RefSeq nucleotide sequence ID" value="NM_024654.5"/>
    <property type="RefSeq protein sequence ID" value="NP_078930.4"/>
</dbReference>
<dbReference type="UCSC" id="uc001ans.4">
    <property type="organism name" value="human"/>
</dbReference>
<dbReference type="AGR" id="HGNC:26265"/>
<dbReference type="CTD" id="79707"/>
<dbReference type="DisGeNET" id="79707"/>
<dbReference type="GeneCards" id="NOL9"/>
<dbReference type="HGNC" id="HGNC:26265">
    <property type="gene designation" value="NOL9"/>
</dbReference>
<dbReference type="HPA" id="ENSG00000162408">
    <property type="expression patterns" value="Low tissue specificity"/>
</dbReference>
<dbReference type="MIM" id="620304">
    <property type="type" value="gene"/>
</dbReference>
<dbReference type="neXtProt" id="NX_Q5SY16"/>
<dbReference type="OpenTargets" id="ENSG00000162408"/>
<dbReference type="PharmGKB" id="PA142671256"/>
<dbReference type="VEuPathDB" id="HostDB:ENSG00000162408"/>
<dbReference type="eggNOG" id="KOG2750">
    <property type="taxonomic scope" value="Eukaryota"/>
</dbReference>
<dbReference type="GeneTree" id="ENSGT00940000153668"/>
<dbReference type="HOGENOM" id="CLU_021128_2_0_1"/>
<dbReference type="InParanoid" id="Q5SY16"/>
<dbReference type="OMA" id="YFGETSC"/>
<dbReference type="OrthoDB" id="2405412at2759"/>
<dbReference type="PAN-GO" id="Q5SY16">
    <property type="GO annotations" value="4 GO annotations based on evolutionary models"/>
</dbReference>
<dbReference type="PhylomeDB" id="Q5SY16"/>
<dbReference type="TreeFam" id="TF313802"/>
<dbReference type="PathwayCommons" id="Q5SY16"/>
<dbReference type="Reactome" id="R-HSA-6791226">
    <property type="pathway name" value="Major pathway of rRNA processing in the nucleolus and cytosol"/>
</dbReference>
<dbReference type="SignaLink" id="Q5SY16"/>
<dbReference type="SIGNOR" id="Q5SY16"/>
<dbReference type="BioGRID-ORCS" id="79707">
    <property type="hits" value="754 hits in 1168 CRISPR screens"/>
</dbReference>
<dbReference type="CD-CODE" id="91857CE7">
    <property type="entry name" value="Nucleolus"/>
</dbReference>
<dbReference type="ChiTaRS" id="NOL9">
    <property type="organism name" value="human"/>
</dbReference>
<dbReference type="GeneWiki" id="NOL9"/>
<dbReference type="GenomeRNAi" id="79707"/>
<dbReference type="Pharos" id="Q5SY16">
    <property type="development level" value="Tdark"/>
</dbReference>
<dbReference type="PRO" id="PR:Q5SY16"/>
<dbReference type="Proteomes" id="UP000005640">
    <property type="component" value="Chromosome 1"/>
</dbReference>
<dbReference type="RNAct" id="Q5SY16">
    <property type="molecule type" value="protein"/>
</dbReference>
<dbReference type="Bgee" id="ENSG00000162408">
    <property type="expression patterns" value="Expressed in tibialis anterior and 214 other cell types or tissues"/>
</dbReference>
<dbReference type="GO" id="GO:0045111">
    <property type="term" value="C:intermediate filament cytoskeleton"/>
    <property type="evidence" value="ECO:0000314"/>
    <property type="project" value="HPA"/>
</dbReference>
<dbReference type="GO" id="GO:0016020">
    <property type="term" value="C:membrane"/>
    <property type="evidence" value="ECO:0007005"/>
    <property type="project" value="UniProtKB"/>
</dbReference>
<dbReference type="GO" id="GO:0005730">
    <property type="term" value="C:nucleolus"/>
    <property type="evidence" value="ECO:0000314"/>
    <property type="project" value="UniProtKB"/>
</dbReference>
<dbReference type="GO" id="GO:0005654">
    <property type="term" value="C:nucleoplasm"/>
    <property type="evidence" value="ECO:0000304"/>
    <property type="project" value="Reactome"/>
</dbReference>
<dbReference type="GO" id="GO:0005634">
    <property type="term" value="C:nucleus"/>
    <property type="evidence" value="ECO:0000318"/>
    <property type="project" value="GO_Central"/>
</dbReference>
<dbReference type="GO" id="GO:0005524">
    <property type="term" value="F:ATP binding"/>
    <property type="evidence" value="ECO:0000304"/>
    <property type="project" value="UniProtKB"/>
</dbReference>
<dbReference type="GO" id="GO:0046404">
    <property type="term" value="F:ATP-dependent polydeoxyribonucleotide 5'-hydroxyl-kinase activity"/>
    <property type="evidence" value="ECO:0000314"/>
    <property type="project" value="UniProtKB"/>
</dbReference>
<dbReference type="GO" id="GO:0051736">
    <property type="term" value="F:ATP-dependent polyribonucleotide 5'-hydroxyl-kinase activity"/>
    <property type="evidence" value="ECO:0007669"/>
    <property type="project" value="RHEA"/>
</dbReference>
<dbReference type="GO" id="GO:0051731">
    <property type="term" value="F:polynucleotide 5'-hydroxyl-kinase activity"/>
    <property type="evidence" value="ECO:0000318"/>
    <property type="project" value="GO_Central"/>
</dbReference>
<dbReference type="GO" id="GO:0003723">
    <property type="term" value="F:RNA binding"/>
    <property type="evidence" value="ECO:0007669"/>
    <property type="project" value="UniProtKB-KW"/>
</dbReference>
<dbReference type="GO" id="GO:0000448">
    <property type="term" value="P:cleavage in ITS2 between 5.8S rRNA and LSU-rRNA of tricistronic rRNA transcript (SSU-rRNA, 5.8S rRNA, LSU-rRNA)"/>
    <property type="evidence" value="ECO:0000318"/>
    <property type="project" value="GO_Central"/>
</dbReference>
<dbReference type="GO" id="GO:0000460">
    <property type="term" value="P:maturation of 5.8S rRNA"/>
    <property type="evidence" value="ECO:0000315"/>
    <property type="project" value="UniProtKB"/>
</dbReference>
<dbReference type="FunFam" id="3.40.50.300:FF:001243">
    <property type="entry name" value="Nucleolar protein 9"/>
    <property type="match status" value="1"/>
</dbReference>
<dbReference type="Gene3D" id="3.40.50.300">
    <property type="entry name" value="P-loop containing nucleotide triphosphate hydrolases"/>
    <property type="match status" value="1"/>
</dbReference>
<dbReference type="InterPro" id="IPR045116">
    <property type="entry name" value="Clp1/Grc3"/>
</dbReference>
<dbReference type="InterPro" id="IPR032319">
    <property type="entry name" value="CLP1_P"/>
</dbReference>
<dbReference type="InterPro" id="IPR027417">
    <property type="entry name" value="P-loop_NTPase"/>
</dbReference>
<dbReference type="PANTHER" id="PTHR12755">
    <property type="entry name" value="CLEAVAGE/POLYADENYLATION FACTOR IA SUBUNIT CLP1P"/>
    <property type="match status" value="1"/>
</dbReference>
<dbReference type="PANTHER" id="PTHR12755:SF3">
    <property type="entry name" value="POLYNUCLEOTIDE 5'-HYDROXYL-KINASE NOL9"/>
    <property type="match status" value="1"/>
</dbReference>
<dbReference type="Pfam" id="PF16575">
    <property type="entry name" value="CLP1_P"/>
    <property type="match status" value="1"/>
</dbReference>
<dbReference type="Pfam" id="PF24419">
    <property type="entry name" value="Cupin_NOL9"/>
    <property type="match status" value="1"/>
</dbReference>
<dbReference type="Pfam" id="PF25467">
    <property type="entry name" value="NOL9_C"/>
    <property type="match status" value="1"/>
</dbReference>